<comment type="function">
    <text evidence="1 2">Proton-conducting pore forming subunit of the V0 complex of vacuolar(H+)-ATPase (V-ATPase), a multisubunit enzyme composed of a peripheral complex (V1) that hydrolyzes ATP and a membrane integral complex (V0) that translocates protons (By similarity). V-ATPase is responsible for acidifying and maintaining the pH of intracellular compartments and in some cell types, is targeted to the plasma membrane, where it is responsible for acidifying the extracellular environment (By similarity).</text>
</comment>
<comment type="subunit">
    <text evidence="2">V-ATPase is a heteromultimeric enzyme made up of two complexes: the ATP-hydrolytic V1 complex and the proton translocation V0 complex (By similarity). The V1 complex consists of three catalytic AB heterodimers that form a heterohexamer, three peripheral stalks each consisting of EG heterodimers, one central rotor including subunits D and F, and the regulatory subunits C and H (By similarity). The proton translocation complex V0 consists of the proton transport subunit a, a ring of proteolipid subunits c9c'', rotary subunit d, subunits e and f, and the accessory subunits VhaAC45 and ATP6AP2 (By similarity).</text>
</comment>
<comment type="subcellular location">
    <subcellularLocation>
        <location evidence="4">Membrane</location>
        <topology evidence="4">Multi-pass membrane protein</topology>
    </subcellularLocation>
</comment>
<comment type="similarity">
    <text evidence="5">Belongs to the V-ATPase proteolipid subunit family.</text>
</comment>
<protein>
    <recommendedName>
        <fullName evidence="5">V-type proton ATPase 16 kDa proteolipid subunit c</fullName>
        <shortName evidence="5">V-ATPase 16 kDa proteolipid subunit c</shortName>
    </recommendedName>
    <alternativeName>
        <fullName evidence="5">Vacuolar proton pump 16 kDa proteolipid subunit c</fullName>
    </alternativeName>
</protein>
<feature type="chain" id="PRO_0000071751" description="V-type proton ATPase 16 kDa proteolipid subunit c">
    <location>
        <begin position="1"/>
        <end position="156"/>
    </location>
</feature>
<feature type="topological domain" description="Lumenal" evidence="4">
    <location>
        <begin position="1"/>
        <end position="7"/>
    </location>
</feature>
<feature type="transmembrane region" description="Helical" evidence="4">
    <location>
        <begin position="8"/>
        <end position="30"/>
    </location>
</feature>
<feature type="topological domain" description="Cytoplasmic" evidence="4">
    <location>
        <begin position="31"/>
        <end position="52"/>
    </location>
</feature>
<feature type="transmembrane region" description="Helical" evidence="4">
    <location>
        <begin position="53"/>
        <end position="73"/>
    </location>
</feature>
<feature type="topological domain" description="Lumenal" evidence="4">
    <location>
        <begin position="74"/>
        <end position="92"/>
    </location>
</feature>
<feature type="transmembrane region" description="Helical" evidence="4">
    <location>
        <begin position="93"/>
        <end position="114"/>
    </location>
</feature>
<feature type="topological domain" description="Cytoplasmic" evidence="4">
    <location>
        <begin position="115"/>
        <end position="126"/>
    </location>
</feature>
<feature type="transmembrane region" description="Helical" evidence="4">
    <location>
        <begin position="127"/>
        <end position="152"/>
    </location>
</feature>
<feature type="topological domain" description="Lumenal" evidence="4">
    <location>
        <begin position="153"/>
        <end position="156"/>
    </location>
</feature>
<feature type="site" description="Essential for proton translocation" evidence="3">
    <location>
        <position position="139"/>
    </location>
</feature>
<dbReference type="EMBL" id="L16884">
    <property type="protein sequence ID" value="AAC37176.1"/>
    <property type="molecule type" value="mRNA"/>
</dbReference>
<dbReference type="PIR" id="A56680">
    <property type="entry name" value="A56680"/>
</dbReference>
<dbReference type="SMR" id="P55277"/>
<dbReference type="GO" id="GO:0033179">
    <property type="term" value="C:proton-transporting V-type ATPase, V0 domain"/>
    <property type="evidence" value="ECO:0007669"/>
    <property type="project" value="InterPro"/>
</dbReference>
<dbReference type="GO" id="GO:0046961">
    <property type="term" value="F:proton-transporting ATPase activity, rotational mechanism"/>
    <property type="evidence" value="ECO:0007669"/>
    <property type="project" value="InterPro"/>
</dbReference>
<dbReference type="CDD" id="cd18175">
    <property type="entry name" value="ATP-synt_Vo_c_ATP6C_rpt1"/>
    <property type="match status" value="1"/>
</dbReference>
<dbReference type="CDD" id="cd18176">
    <property type="entry name" value="ATP-synt_Vo_c_ATP6C_rpt2"/>
    <property type="match status" value="1"/>
</dbReference>
<dbReference type="FunFam" id="1.20.120.610:FF:000001">
    <property type="entry name" value="V-type proton ATPase proteolipid subunit"/>
    <property type="match status" value="1"/>
</dbReference>
<dbReference type="Gene3D" id="1.20.120.610">
    <property type="entry name" value="lithium bound rotor ring of v- atpase"/>
    <property type="match status" value="1"/>
</dbReference>
<dbReference type="InterPro" id="IPR002379">
    <property type="entry name" value="ATPase_proteolipid_c-like_dom"/>
</dbReference>
<dbReference type="InterPro" id="IPR000245">
    <property type="entry name" value="ATPase_proteolipid_csu"/>
</dbReference>
<dbReference type="InterPro" id="IPR011555">
    <property type="entry name" value="ATPase_proteolipid_su_C_euk"/>
</dbReference>
<dbReference type="InterPro" id="IPR035921">
    <property type="entry name" value="F/V-ATP_Csub_sf"/>
</dbReference>
<dbReference type="NCBIfam" id="TIGR01100">
    <property type="entry name" value="V_ATP_synt_C"/>
    <property type="match status" value="1"/>
</dbReference>
<dbReference type="PANTHER" id="PTHR10263">
    <property type="entry name" value="V-TYPE PROTON ATPASE PROTEOLIPID SUBUNIT"/>
    <property type="match status" value="1"/>
</dbReference>
<dbReference type="Pfam" id="PF00137">
    <property type="entry name" value="ATP-synt_C"/>
    <property type="match status" value="2"/>
</dbReference>
<dbReference type="PRINTS" id="PR00122">
    <property type="entry name" value="VACATPASE"/>
</dbReference>
<dbReference type="SUPFAM" id="SSF81333">
    <property type="entry name" value="F1F0 ATP synthase subunit C"/>
    <property type="match status" value="2"/>
</dbReference>
<name>VATL_HELVI</name>
<reference key="1">
    <citation type="journal article" date="1993" name="Insect Biochem. Mol. Biol.">
        <title>Sequence of a 17 kDa vacuolar H(+)-ATPase proteolipid subunit from insect midgut and Malpighian tubules.</title>
        <authorList>
            <person name="Pietrantonio P.V."/>
            <person name="Gill S.S."/>
        </authorList>
    </citation>
    <scope>NUCLEOTIDE SEQUENCE [MRNA]</scope>
    <source>
        <tissue>Midgut</tissue>
    </source>
</reference>
<keyword id="KW-0375">Hydrogen ion transport</keyword>
<keyword id="KW-0406">Ion transport</keyword>
<keyword id="KW-0472">Membrane</keyword>
<keyword id="KW-0812">Transmembrane</keyword>
<keyword id="KW-1133">Transmembrane helix</keyword>
<keyword id="KW-0813">Transport</keyword>
<sequence length="156" mass="15934">MAENPIYGPFFGVMGAASAIIFSALGAAYGTAKSGTGIAAMSVMRPELIMKSIIPVVMAGIIAIYGLVVAVLIAGSLDAPSNNYTLYKGFIHLGAGLAVGFSGLAAGFAIGIVGDAGVRGTAQQPRLFVGMILILIFAEVLGLYGLIVAIYLYTKQ</sequence>
<accession>P55277</accession>
<evidence type="ECO:0000250" key="1">
    <source>
        <dbReference type="UniProtKB" id="P23380"/>
    </source>
</evidence>
<evidence type="ECO:0000250" key="2">
    <source>
        <dbReference type="UniProtKB" id="P27449"/>
    </source>
</evidence>
<evidence type="ECO:0000250" key="3">
    <source>
        <dbReference type="UniProtKB" id="P63081"/>
    </source>
</evidence>
<evidence type="ECO:0000255" key="4"/>
<evidence type="ECO:0000305" key="5"/>
<organism>
    <name type="scientific">Heliothis virescens</name>
    <name type="common">Tobacco budworm moth</name>
    <dbReference type="NCBI Taxonomy" id="7102"/>
    <lineage>
        <taxon>Eukaryota</taxon>
        <taxon>Metazoa</taxon>
        <taxon>Ecdysozoa</taxon>
        <taxon>Arthropoda</taxon>
        <taxon>Hexapoda</taxon>
        <taxon>Insecta</taxon>
        <taxon>Pterygota</taxon>
        <taxon>Neoptera</taxon>
        <taxon>Endopterygota</taxon>
        <taxon>Lepidoptera</taxon>
        <taxon>Glossata</taxon>
        <taxon>Ditrysia</taxon>
        <taxon>Noctuoidea</taxon>
        <taxon>Noctuidae</taxon>
        <taxon>Heliothinae</taxon>
        <taxon>Heliothis</taxon>
    </lineage>
</organism>
<proteinExistence type="evidence at transcript level"/>
<gene>
    <name type="primary">VHA16</name>
</gene>